<feature type="initiator methionine" description="Removed" evidence="1">
    <location>
        <position position="1"/>
    </location>
</feature>
<feature type="chain" id="PRO_0000431560" description="Methanol:N,N-dimethyl-4-nitrosoaniline oxidoreductase">
    <location>
        <begin position="2"/>
        <end position="429"/>
    </location>
</feature>
<proteinExistence type="evidence at protein level"/>
<protein>
    <recommendedName>
        <fullName evidence="5">Methanol:N,N-dimethyl-4-nitrosoaniline oxidoreductase</fullName>
        <shortName evidence="5">MNO</shortName>
        <ecNumber evidence="1 3">1.1.99.37</ecNumber>
    </recommendedName>
    <alternativeName>
        <fullName evidence="6">Methanol dehydrogenase (nicotinoprotein)</fullName>
    </alternativeName>
    <alternativeName>
        <fullName evidence="5">Methanol:NDMA oxidoreductase</fullName>
    </alternativeName>
</protein>
<comment type="function">
    <text evidence="1 2 3 4">Catalyzes the oxidation of methanol to yield formaldehyde. While the in vivo electron acceptor is not known, N,N-dimethyl-4-nitrosoaniline (NDMA) can serve this function in vitro and is reduced to 4-(hydroxylamino)-N,N-dimethylaniline. It can also use various other primary alcohols, polyols and formaldehyde. In addition, MNO is able to produce methylformate from methanol plus formaldehyde, and possesses a formaldehyde dismutase and a NADH-dependent formaldehyde reductase activity.</text>
</comment>
<comment type="catalytic activity">
    <reaction evidence="1 3">
        <text>methanol + A = formaldehyde + AH2</text>
        <dbReference type="Rhea" id="RHEA:33571"/>
        <dbReference type="ChEBI" id="CHEBI:13193"/>
        <dbReference type="ChEBI" id="CHEBI:16842"/>
        <dbReference type="ChEBI" id="CHEBI:17499"/>
        <dbReference type="ChEBI" id="CHEBI:17790"/>
        <dbReference type="EC" id="1.1.99.37"/>
    </reaction>
</comment>
<comment type="cofactor">
    <cofactor evidence="1">
        <name>Mg(2+)</name>
        <dbReference type="ChEBI" id="CHEBI:18420"/>
    </cofactor>
</comment>
<comment type="cofactor">
    <cofactor evidence="1">
        <name>Zn(2+)</name>
        <dbReference type="ChEBI" id="CHEBI:29105"/>
    </cofactor>
</comment>
<comment type="cofactor">
    <cofactor evidence="1">
        <name>NADPH</name>
        <dbReference type="ChEBI" id="CHEBI:57783"/>
    </cofactor>
</comment>
<comment type="activity regulation">
    <text evidence="3">Inhibited by azide and hydrazine.</text>
</comment>
<comment type="biophysicochemical properties">
    <kinetics>
        <KM evidence="3">1 uM for isobutanol (at pH 6.3 and 30 degrees Celsius)</KM>
        <KM evidence="3">2 uM for butanol (at pH 6.3 and 30 degrees Celsius)</KM>
        <KM evidence="3">2 uM for propanol (at pH 6.3 and 30 degrees Celsius)</KM>
        <KM evidence="3">7 uM for formaldehyde (at pH 6.3 and 30 degrees Celsius)</KM>
        <KM evidence="3">10 uM for 2-methoxyethanol (at pH 6.3 and 30 degrees Celsius)</KM>
        <KM evidence="3">18 uM for NDMA (at pH 6.3 and 30 degrees Celsius)</KM>
        <KM evidence="3">47 uM for ethyleneglycol (at pH 6.3 and 30 degrees Celsius)</KM>
        <KM evidence="3">57 uM for ethanol (at pH 6.3 and 30 degrees Celsius)</KM>
        <KM evidence="3">110 uM for propan-2-ol (at pH 6.3 and 30 degrees Celsius)</KM>
        <KM evidence="3">970 uM for glycerol (at pH 6.3 and 30 degrees Celsius)</KM>
        <KM evidence="3">2.65 mM for methanol (at pH 6.3 and 30 degrees Celsius)</KM>
        <KM evidence="3">17 mM for ethanolamine (at pH 6.3 and 30 degrees Celsius)</KM>
        <Vmax evidence="3">40.0 umol/min/mg enzyme with ethanolamine as substrate (at pH 6.3 and 30 degrees Celsius)</Vmax>
        <Vmax evidence="3">51.0 umol/min/mg enzyme with formaldehyde as substrate (at pH 6.3 and 30 degrees Celsius)</Vmax>
        <Vmax evidence="3">57.0 umol/min/mg enzyme with methanol as substrate (at pH 6.3 and 30 degrees Celsius)</Vmax>
        <Vmax evidence="3">63.0 umol/min/mg enzyme with 2-methoxyethanol as substrate (at pH 6.3 and 30 degrees Celsius)</Vmax>
        <Vmax evidence="3">65.0 umol/min/mg enzyme with NDMA as substrate (at pH 6.3 and 30 degrees Celsius)</Vmax>
        <Vmax evidence="3">66.0 umol/min/mg enzyme with ethyleneglycol as substrate (at pH 6.3 and 30 degrees Celsius)</Vmax>
        <Vmax evidence="3">72.0 umol/min/mg enzyme with glycerol as substrate (at pH 6.3 and 30 degrees Celsius)</Vmax>
        <Vmax evidence="3">73.0 umol/min/mg enzyme with isobutanol as substrate (at pH 6.3 and 30 degrees Celsius)</Vmax>
        <Vmax evidence="3">73.0 umol/min/mg enzyme with propan-2-ol as substrate (at pH 6.3 and 30 degrees Celsius)</Vmax>
        <Vmax evidence="3">76.0 umol/min/mg enzyme with butanol as substrate (at pH 6.3 and 30 degrees Celsius)</Vmax>
        <Vmax evidence="3">77.0 umol/min/mg enzyme with propanol as substrate (at pH 6.3 and 30 degrees Celsius)</Vmax>
        <Vmax evidence="3">90.0 umol/min/mg enzyme with ethanol as substrate (at pH 6.3 and 30 degrees Celsius)</Vmax>
    </kinetics>
    <phDependence>
        <text evidence="3">Optimum pH is between 4.5 and 5.</text>
    </phDependence>
    <temperatureDependence>
        <text evidence="3">The MNO activity increases with temperature up to 55 degrees Celsius.</text>
    </temperatureDependence>
</comment>
<comment type="subunit">
    <text evidence="1">Homodecamer.</text>
</comment>
<comment type="induction">
    <text evidence="4">By methanol and ethanol.</text>
</comment>
<comment type="disruption phenotype">
    <text evidence="4">Cells lacking this gene are unable to grow methanol, ethanol, propan-1-ol and butan-1-ol, but are still able to grow on formaldehyde.</text>
</comment>
<comment type="similarity">
    <text evidence="6">Belongs to the iron-containing alcohol dehydrogenase family.</text>
</comment>
<name>MNO_AMYME</name>
<evidence type="ECO:0000269" key="1">
    <source>
    </source>
</evidence>
<evidence type="ECO:0000269" key="2">
    <source ref="1"/>
</evidence>
<evidence type="ECO:0000269" key="3">
    <source ref="3"/>
</evidence>
<evidence type="ECO:0000269" key="4">
    <source ref="4"/>
</evidence>
<evidence type="ECO:0000303" key="5">
    <source>
    </source>
</evidence>
<evidence type="ECO:0000305" key="6"/>
<reference key="1">
    <citation type="submission" date="1997-02" db="EMBL/GenBank/DDBJ databases">
        <authorList>
            <person name="Hektor H.J."/>
            <person name="Bron D."/>
            <person name="Dijkhuizen L."/>
        </authorList>
    </citation>
    <scope>NUCLEOTIDE SEQUENCE [GENOMIC DNA]</scope>
</reference>
<reference key="2">
    <citation type="journal article" date="1993" name="J. Bacteriol.">
        <title>Electron microscopic analysis and structural characterization of novel NADP(H)-containing methanol: N,N'-dimethyl-4-nitrosoaniline oxidoreductases from the Gram-positive methylotrophic bacteria Amycolatopsis methanolica and Mycobacterium gastri MB19.</title>
        <authorList>
            <person name="Bystrykh L.V."/>
            <person name="Vonck J."/>
            <person name="van Bruggen E.F."/>
            <person name="van Beeumen J."/>
            <person name="Samyn B."/>
            <person name="Govorukhina N.I."/>
            <person name="Arfman N."/>
            <person name="Duine J.A."/>
            <person name="Dijkhuizen L."/>
        </authorList>
    </citation>
    <scope>PROTEIN SEQUENCE OF 2-47</scope>
    <scope>FUNCTION</scope>
    <scope>CATALYTIC ACTIVITY</scope>
    <scope>COFACTOR</scope>
    <scope>SUBUNIT</scope>
</reference>
<reference key="3">
    <citation type="journal article" date="1993" name="J. Gen. Microbiol.">
        <title>Formaldehyde dismutase activities in Gram-positive bacteria oxidizing methanol.</title>
        <authorList>
            <person name="Bystrykh L.V."/>
            <person name="Govorukhina N.I."/>
            <person name="van Ophem P.W."/>
            <person name="Hektor H.J."/>
            <person name="Dijkhuizen L."/>
            <person name="Duine J.A."/>
        </authorList>
    </citation>
    <scope>FUNCTION</scope>
    <scope>CATALYTIC ACTIVITY</scope>
    <scope>BIOPHYSICOCHEMICAL PROPERTIES</scope>
    <scope>ACTIVITY REGULATION</scope>
    <scope>SUBSTRATE SPECIFICITY</scope>
    <source>
        <strain>DSM 44096 / JCM 8087 / NBRC 15065 / NCIMB 11946 / NRRL B-24139 / LMD 80.32 / 239</strain>
    </source>
</reference>
<reference key="4">
    <citation type="journal article" date="1996" name="FEMS Microbiol. Lett.">
        <title>Mutational analysis of primary alcohol metabolism in the methylotrophic actinomycete Amycolatopsis methanolica.</title>
        <authorList>
            <person name="Hektor H.J."/>
            <person name="Dijkhuizen L."/>
        </authorList>
    </citation>
    <scope>FUNCTION</scope>
    <scope>DISRUPTION PHENOTYPE</scope>
    <scope>INDUCTION</scope>
    <source>
        <strain>DSM 44096 / JCM 8087 / NBRC 15065 / NCIMB 11946 / NRRL B-24139 / LMD 80.32 / 239</strain>
    </source>
</reference>
<accession>Q9RCG0</accession>
<organism>
    <name type="scientific">Amycolatopsis methanolica</name>
    <dbReference type="NCBI Taxonomy" id="1814"/>
    <lineage>
        <taxon>Bacteria</taxon>
        <taxon>Bacillati</taxon>
        <taxon>Actinomycetota</taxon>
        <taxon>Actinomycetes</taxon>
        <taxon>Pseudonocardiales</taxon>
        <taxon>Pseudonocardiaceae</taxon>
        <taxon>Amycolatopsis</taxon>
        <taxon>Amycolatopsis methanolica group</taxon>
    </lineage>
</organism>
<keyword id="KW-0903">Direct protein sequencing</keyword>
<keyword id="KW-0460">Magnesium</keyword>
<keyword id="KW-0485">Methanol utilization</keyword>
<keyword id="KW-0521">NADP</keyword>
<keyword id="KW-0560">Oxidoreductase</keyword>
<keyword id="KW-0862">Zinc</keyword>
<gene>
    <name type="primary">mno</name>
</gene>
<sequence>MQVDELLKPFPIKEFHPFPRALLGPGAHEMIGPEALKLGFKKTLVMTSGLRGSDIVHKITESMKYHGLEVVLYDKVESNPKDYNVMDAVKLYQENKCDSFVSIGGGSSHDACKGARISVAHDGRNVNDFEGFNKSENPRNPPHIAVSTTAGTGSETSWAYVITDTTTDPDNPHKYVAFDDASVATLAIDDPVLYYSCPIDYTAQCGFDVLAHASEPYVSRLNFEPSLGNALRAIKLTAENLRQATWNPSELSGREGMMYAQYIAAQAFNSGGLGIIHSISHAVSAFYDTHHGLNNAIALPRVWAFNMPVAYKRFADMAEAMGVDTHGMTDVQAADALAAAIRLLRDVGIPEKFTDVTQDSYSKNRLGQGPTKFYEQASVIKGDDEDVDRITNHVLGDACTPGNAKECTFETVRPVVDHCMNGDLDDLLS</sequence>
<dbReference type="EC" id="1.1.99.37" evidence="1 3"/>
<dbReference type="EMBL" id="U89273">
    <property type="protein sequence ID" value="AAF21473.1"/>
    <property type="molecule type" value="Genomic_DNA"/>
</dbReference>
<dbReference type="SMR" id="Q9RCG0"/>
<dbReference type="GO" id="GO:0004022">
    <property type="term" value="F:alcohol dehydrogenase (NAD+) activity"/>
    <property type="evidence" value="ECO:0007669"/>
    <property type="project" value="TreeGrafter"/>
</dbReference>
<dbReference type="GO" id="GO:0000287">
    <property type="term" value="F:magnesium ion binding"/>
    <property type="evidence" value="ECO:0000314"/>
    <property type="project" value="UniProtKB"/>
</dbReference>
<dbReference type="GO" id="GO:0070402">
    <property type="term" value="F:NADPH binding"/>
    <property type="evidence" value="ECO:0000314"/>
    <property type="project" value="UniProtKB"/>
</dbReference>
<dbReference type="GO" id="GO:0016491">
    <property type="term" value="F:oxidoreductase activity"/>
    <property type="evidence" value="ECO:0000314"/>
    <property type="project" value="UniProtKB"/>
</dbReference>
<dbReference type="GO" id="GO:0008270">
    <property type="term" value="F:zinc ion binding"/>
    <property type="evidence" value="ECO:0000314"/>
    <property type="project" value="UniProtKB"/>
</dbReference>
<dbReference type="GO" id="GO:0015946">
    <property type="term" value="P:methanol oxidation"/>
    <property type="evidence" value="ECO:0000314"/>
    <property type="project" value="UniProtKB"/>
</dbReference>
<dbReference type="CDD" id="cd08176">
    <property type="entry name" value="LPO"/>
    <property type="match status" value="1"/>
</dbReference>
<dbReference type="FunFam" id="3.40.50.1970:FF:000011">
    <property type="entry name" value="NDMA-dependent methanol dehydrogenase"/>
    <property type="match status" value="1"/>
</dbReference>
<dbReference type="Gene3D" id="3.40.50.1970">
    <property type="match status" value="1"/>
</dbReference>
<dbReference type="Gene3D" id="1.20.1090.10">
    <property type="entry name" value="Dehydroquinate synthase-like - alpha domain"/>
    <property type="match status" value="1"/>
</dbReference>
<dbReference type="InterPro" id="IPR001670">
    <property type="entry name" value="ADH_Fe/GldA"/>
</dbReference>
<dbReference type="InterPro" id="IPR056798">
    <property type="entry name" value="ADH_Fe_C"/>
</dbReference>
<dbReference type="InterPro" id="IPR039697">
    <property type="entry name" value="Alcohol_dehydrogenase_Fe"/>
</dbReference>
<dbReference type="InterPro" id="IPR026338">
    <property type="entry name" value="NDMA_methanol_DH"/>
</dbReference>
<dbReference type="NCBIfam" id="TIGR04266">
    <property type="entry name" value="NDMA_methanol"/>
    <property type="match status" value="1"/>
</dbReference>
<dbReference type="PANTHER" id="PTHR11496">
    <property type="entry name" value="ALCOHOL DEHYDROGENASE"/>
    <property type="match status" value="1"/>
</dbReference>
<dbReference type="PANTHER" id="PTHR11496:SF102">
    <property type="entry name" value="ALCOHOL DEHYDROGENASE 4"/>
    <property type="match status" value="1"/>
</dbReference>
<dbReference type="Pfam" id="PF25137">
    <property type="entry name" value="ADH_Fe_C"/>
    <property type="match status" value="1"/>
</dbReference>
<dbReference type="Pfam" id="PF00465">
    <property type="entry name" value="Fe-ADH"/>
    <property type="match status" value="1"/>
</dbReference>
<dbReference type="SUPFAM" id="SSF56796">
    <property type="entry name" value="Dehydroquinate synthase-like"/>
    <property type="match status" value="1"/>
</dbReference>